<feature type="chain" id="PRO_0000230887" description="Transcriptional repressor NrdR">
    <location>
        <begin position="1"/>
        <end position="155"/>
    </location>
</feature>
<feature type="domain" description="ATP-cone" evidence="1">
    <location>
        <begin position="49"/>
        <end position="139"/>
    </location>
</feature>
<feature type="zinc finger region" evidence="1">
    <location>
        <begin position="3"/>
        <end position="34"/>
    </location>
</feature>
<organism>
    <name type="scientific">Cereibacter sphaeroides (strain ATCC 17023 / DSM 158 / JCM 6121 / CCUG 31486 / LMG 2827 / NBRC 12203 / NCIMB 8253 / ATH 2.4.1.)</name>
    <name type="common">Rhodobacter sphaeroides</name>
    <dbReference type="NCBI Taxonomy" id="272943"/>
    <lineage>
        <taxon>Bacteria</taxon>
        <taxon>Pseudomonadati</taxon>
        <taxon>Pseudomonadota</taxon>
        <taxon>Alphaproteobacteria</taxon>
        <taxon>Rhodobacterales</taxon>
        <taxon>Paracoccaceae</taxon>
        <taxon>Cereibacter</taxon>
    </lineage>
</organism>
<sequence length="155" mass="17814">MRCPFCGNIDTQVKDSRPAEDHVSIRRRRFCPACGGRFTTYERVQLRDLVVIKSSGKREDFDRTKLERSIRIAMQKRPIEPERIDQMISGIVRRLESLGDTDIPSKVIGEIVMESLARIDTVAYVRFASVYKNFQAADDFDKFVSELRPSAPAEE</sequence>
<name>NRDR_CERS4</name>
<proteinExistence type="inferred from homology"/>
<keyword id="KW-0067">ATP-binding</keyword>
<keyword id="KW-0238">DNA-binding</keyword>
<keyword id="KW-0479">Metal-binding</keyword>
<keyword id="KW-0547">Nucleotide-binding</keyword>
<keyword id="KW-1185">Reference proteome</keyword>
<keyword id="KW-0678">Repressor</keyword>
<keyword id="KW-0804">Transcription</keyword>
<keyword id="KW-0805">Transcription regulation</keyword>
<keyword id="KW-0862">Zinc</keyword>
<keyword id="KW-0863">Zinc-finger</keyword>
<dbReference type="EMBL" id="CP000143">
    <property type="protein sequence ID" value="ABA79568.1"/>
    <property type="molecule type" value="Genomic_DNA"/>
</dbReference>
<dbReference type="RefSeq" id="WP_002720557.1">
    <property type="nucleotide sequence ID" value="NZ_CP030271.1"/>
</dbReference>
<dbReference type="RefSeq" id="YP_353469.1">
    <property type="nucleotide sequence ID" value="NC_007493.2"/>
</dbReference>
<dbReference type="SMR" id="Q3J0W6"/>
<dbReference type="STRING" id="272943.RSP_0394"/>
<dbReference type="EnsemblBacteria" id="ABA79568">
    <property type="protein sequence ID" value="ABA79568"/>
    <property type="gene ID" value="RSP_0394"/>
</dbReference>
<dbReference type="GeneID" id="67447126"/>
<dbReference type="KEGG" id="rsp:RSP_0394"/>
<dbReference type="PATRIC" id="fig|272943.9.peg.2339"/>
<dbReference type="eggNOG" id="COG1327">
    <property type="taxonomic scope" value="Bacteria"/>
</dbReference>
<dbReference type="OrthoDB" id="9807461at2"/>
<dbReference type="PhylomeDB" id="Q3J0W6"/>
<dbReference type="Proteomes" id="UP000002703">
    <property type="component" value="Chromosome 1"/>
</dbReference>
<dbReference type="GO" id="GO:0005524">
    <property type="term" value="F:ATP binding"/>
    <property type="evidence" value="ECO:0007669"/>
    <property type="project" value="UniProtKB-KW"/>
</dbReference>
<dbReference type="GO" id="GO:0003677">
    <property type="term" value="F:DNA binding"/>
    <property type="evidence" value="ECO:0007669"/>
    <property type="project" value="UniProtKB-KW"/>
</dbReference>
<dbReference type="GO" id="GO:0008270">
    <property type="term" value="F:zinc ion binding"/>
    <property type="evidence" value="ECO:0007669"/>
    <property type="project" value="UniProtKB-UniRule"/>
</dbReference>
<dbReference type="GO" id="GO:0045892">
    <property type="term" value="P:negative regulation of DNA-templated transcription"/>
    <property type="evidence" value="ECO:0007669"/>
    <property type="project" value="UniProtKB-UniRule"/>
</dbReference>
<dbReference type="HAMAP" id="MF_00440">
    <property type="entry name" value="NrdR"/>
    <property type="match status" value="1"/>
</dbReference>
<dbReference type="InterPro" id="IPR005144">
    <property type="entry name" value="ATP-cone_dom"/>
</dbReference>
<dbReference type="InterPro" id="IPR055173">
    <property type="entry name" value="NrdR-like_N"/>
</dbReference>
<dbReference type="InterPro" id="IPR003796">
    <property type="entry name" value="RNR_NrdR-like"/>
</dbReference>
<dbReference type="NCBIfam" id="TIGR00244">
    <property type="entry name" value="transcriptional regulator NrdR"/>
    <property type="match status" value="1"/>
</dbReference>
<dbReference type="PANTHER" id="PTHR30455">
    <property type="entry name" value="TRANSCRIPTIONAL REPRESSOR NRDR"/>
    <property type="match status" value="1"/>
</dbReference>
<dbReference type="PANTHER" id="PTHR30455:SF2">
    <property type="entry name" value="TRANSCRIPTIONAL REPRESSOR NRDR"/>
    <property type="match status" value="1"/>
</dbReference>
<dbReference type="Pfam" id="PF03477">
    <property type="entry name" value="ATP-cone"/>
    <property type="match status" value="1"/>
</dbReference>
<dbReference type="Pfam" id="PF22811">
    <property type="entry name" value="Zn_ribbon_NrdR"/>
    <property type="match status" value="1"/>
</dbReference>
<dbReference type="PROSITE" id="PS51161">
    <property type="entry name" value="ATP_CONE"/>
    <property type="match status" value="1"/>
</dbReference>
<reference key="1">
    <citation type="submission" date="2005-09" db="EMBL/GenBank/DDBJ databases">
        <title>Complete sequence of chromosome 1 of Rhodobacter sphaeroides 2.4.1.</title>
        <authorList>
            <person name="Copeland A."/>
            <person name="Lucas S."/>
            <person name="Lapidus A."/>
            <person name="Barry K."/>
            <person name="Detter J.C."/>
            <person name="Glavina T."/>
            <person name="Hammon N."/>
            <person name="Israni S."/>
            <person name="Pitluck S."/>
            <person name="Richardson P."/>
            <person name="Mackenzie C."/>
            <person name="Choudhary M."/>
            <person name="Larimer F."/>
            <person name="Hauser L.J."/>
            <person name="Land M."/>
            <person name="Donohue T.J."/>
            <person name="Kaplan S."/>
        </authorList>
    </citation>
    <scope>NUCLEOTIDE SEQUENCE [LARGE SCALE GENOMIC DNA]</scope>
    <source>
        <strain>ATCC 17023 / DSM 158 / JCM 6121 / CCUG 31486 / LMG 2827 / NBRC 12203 / NCIMB 8253 / ATH 2.4.1.</strain>
    </source>
</reference>
<accession>Q3J0W6</accession>
<gene>
    <name evidence="1" type="primary">nrdR</name>
    <name type="ordered locus">RHOS4_20000</name>
    <name type="ORF">RSP_0394</name>
</gene>
<evidence type="ECO:0000255" key="1">
    <source>
        <dbReference type="HAMAP-Rule" id="MF_00440"/>
    </source>
</evidence>
<protein>
    <recommendedName>
        <fullName evidence="1">Transcriptional repressor NrdR</fullName>
    </recommendedName>
</protein>
<comment type="function">
    <text evidence="1">Negatively regulates transcription of bacterial ribonucleotide reductase nrd genes and operons by binding to NrdR-boxes.</text>
</comment>
<comment type="cofactor">
    <cofactor evidence="1">
        <name>Zn(2+)</name>
        <dbReference type="ChEBI" id="CHEBI:29105"/>
    </cofactor>
    <text evidence="1">Binds 1 zinc ion.</text>
</comment>
<comment type="similarity">
    <text evidence="1">Belongs to the NrdR family.</text>
</comment>